<keyword id="KW-0997">Cell inner membrane</keyword>
<keyword id="KW-1003">Cell membrane</keyword>
<keyword id="KW-0472">Membrane</keyword>
<keyword id="KW-0812">Transmembrane</keyword>
<keyword id="KW-1133">Transmembrane helix</keyword>
<keyword id="KW-0813">Transport</keyword>
<organism>
    <name type="scientific">Salmonella typhi</name>
    <dbReference type="NCBI Taxonomy" id="90370"/>
    <lineage>
        <taxon>Bacteria</taxon>
        <taxon>Pseudomonadati</taxon>
        <taxon>Pseudomonadota</taxon>
        <taxon>Gammaproteobacteria</taxon>
        <taxon>Enterobacterales</taxon>
        <taxon>Enterobacteriaceae</taxon>
        <taxon>Salmonella</taxon>
    </lineage>
</organism>
<protein>
    <recommendedName>
        <fullName evidence="1">Uncharacterized MFS-type transporter YhhS</fullName>
    </recommendedName>
</protein>
<dbReference type="EMBL" id="AL513382">
    <property type="protein sequence ID" value="CAD08049.1"/>
    <property type="molecule type" value="Genomic_DNA"/>
</dbReference>
<dbReference type="EMBL" id="AE014613">
    <property type="protein sequence ID" value="AAO71412.1"/>
    <property type="molecule type" value="Genomic_DNA"/>
</dbReference>
<dbReference type="PIR" id="AE0990">
    <property type="entry name" value="AE0990"/>
</dbReference>
<dbReference type="RefSeq" id="NP_458340.1">
    <property type="nucleotide sequence ID" value="NC_003198.1"/>
</dbReference>
<dbReference type="SMR" id="Q8Z257"/>
<dbReference type="STRING" id="220341.gene:17588062"/>
<dbReference type="KEGG" id="stt:t3941"/>
<dbReference type="KEGG" id="sty:STY4230"/>
<dbReference type="PATRIC" id="fig|220341.7.peg.4320"/>
<dbReference type="eggNOG" id="COG0477">
    <property type="taxonomic scope" value="Bacteria"/>
</dbReference>
<dbReference type="HOGENOM" id="CLU_001265_10_3_6"/>
<dbReference type="OMA" id="ASYFLAW"/>
<dbReference type="Proteomes" id="UP000000541">
    <property type="component" value="Chromosome"/>
</dbReference>
<dbReference type="Proteomes" id="UP000002670">
    <property type="component" value="Chromosome"/>
</dbReference>
<dbReference type="GO" id="GO:0005886">
    <property type="term" value="C:plasma membrane"/>
    <property type="evidence" value="ECO:0007669"/>
    <property type="project" value="UniProtKB-SubCell"/>
</dbReference>
<dbReference type="GO" id="GO:0022857">
    <property type="term" value="F:transmembrane transporter activity"/>
    <property type="evidence" value="ECO:0007669"/>
    <property type="project" value="UniProtKB-UniRule"/>
</dbReference>
<dbReference type="CDD" id="cd17489">
    <property type="entry name" value="MFS_YfcJ_like"/>
    <property type="match status" value="1"/>
</dbReference>
<dbReference type="FunFam" id="1.20.1250.20:FF:000155">
    <property type="entry name" value="Uncharacterized MFS-type transporter YhhS"/>
    <property type="match status" value="1"/>
</dbReference>
<dbReference type="Gene3D" id="1.20.1250.20">
    <property type="entry name" value="MFS general substrate transporter like domains"/>
    <property type="match status" value="1"/>
</dbReference>
<dbReference type="HAMAP" id="MF_01118">
    <property type="entry name" value="MFS_YhhS"/>
    <property type="match status" value="1"/>
</dbReference>
<dbReference type="InterPro" id="IPR011701">
    <property type="entry name" value="MFS"/>
</dbReference>
<dbReference type="InterPro" id="IPR020846">
    <property type="entry name" value="MFS_dom"/>
</dbReference>
<dbReference type="InterPro" id="IPR036259">
    <property type="entry name" value="MFS_trans_sf"/>
</dbReference>
<dbReference type="InterPro" id="IPR050171">
    <property type="entry name" value="MFS_Transporters"/>
</dbReference>
<dbReference type="InterPro" id="IPR023008">
    <property type="entry name" value="MFS_YhhS-like"/>
</dbReference>
<dbReference type="NCBIfam" id="NF003477">
    <property type="entry name" value="PRK05122.1"/>
    <property type="match status" value="1"/>
</dbReference>
<dbReference type="PANTHER" id="PTHR23517:SF13">
    <property type="entry name" value="MAJOR FACILITATOR SUPERFAMILY MFS_1"/>
    <property type="match status" value="1"/>
</dbReference>
<dbReference type="PANTHER" id="PTHR23517">
    <property type="entry name" value="RESISTANCE PROTEIN MDTM, PUTATIVE-RELATED-RELATED"/>
    <property type="match status" value="1"/>
</dbReference>
<dbReference type="Pfam" id="PF07690">
    <property type="entry name" value="MFS_1"/>
    <property type="match status" value="1"/>
</dbReference>
<dbReference type="SUPFAM" id="SSF103473">
    <property type="entry name" value="MFS general substrate transporter"/>
    <property type="match status" value="1"/>
</dbReference>
<dbReference type="PROSITE" id="PS50850">
    <property type="entry name" value="MFS"/>
    <property type="match status" value="1"/>
</dbReference>
<comment type="subcellular location">
    <subcellularLocation>
        <location evidence="1">Cell inner membrane</location>
        <topology evidence="1">Multi-pass membrane protein</topology>
    </subcellularLocation>
</comment>
<comment type="similarity">
    <text evidence="1">Belongs to the major facilitator superfamily. YhhS family.</text>
</comment>
<reference key="1">
    <citation type="journal article" date="2001" name="Nature">
        <title>Complete genome sequence of a multiple drug resistant Salmonella enterica serovar Typhi CT18.</title>
        <authorList>
            <person name="Parkhill J."/>
            <person name="Dougan G."/>
            <person name="James K.D."/>
            <person name="Thomson N.R."/>
            <person name="Pickard D."/>
            <person name="Wain J."/>
            <person name="Churcher C.M."/>
            <person name="Mungall K.L."/>
            <person name="Bentley S.D."/>
            <person name="Holden M.T.G."/>
            <person name="Sebaihia M."/>
            <person name="Baker S."/>
            <person name="Basham D."/>
            <person name="Brooks K."/>
            <person name="Chillingworth T."/>
            <person name="Connerton P."/>
            <person name="Cronin A."/>
            <person name="Davis P."/>
            <person name="Davies R.M."/>
            <person name="Dowd L."/>
            <person name="White N."/>
            <person name="Farrar J."/>
            <person name="Feltwell T."/>
            <person name="Hamlin N."/>
            <person name="Haque A."/>
            <person name="Hien T.T."/>
            <person name="Holroyd S."/>
            <person name="Jagels K."/>
            <person name="Krogh A."/>
            <person name="Larsen T.S."/>
            <person name="Leather S."/>
            <person name="Moule S."/>
            <person name="O'Gaora P."/>
            <person name="Parry C."/>
            <person name="Quail M.A."/>
            <person name="Rutherford K.M."/>
            <person name="Simmonds M."/>
            <person name="Skelton J."/>
            <person name="Stevens K."/>
            <person name="Whitehead S."/>
            <person name="Barrell B.G."/>
        </authorList>
    </citation>
    <scope>NUCLEOTIDE SEQUENCE [LARGE SCALE GENOMIC DNA]</scope>
    <source>
        <strain>CT18</strain>
    </source>
</reference>
<reference key="2">
    <citation type="journal article" date="2003" name="J. Bacteriol.">
        <title>Comparative genomics of Salmonella enterica serovar Typhi strains Ty2 and CT18.</title>
        <authorList>
            <person name="Deng W."/>
            <person name="Liou S.-R."/>
            <person name="Plunkett G. III"/>
            <person name="Mayhew G.F."/>
            <person name="Rose D.J."/>
            <person name="Burland V."/>
            <person name="Kodoyianni V."/>
            <person name="Schwartz D.C."/>
            <person name="Blattner F.R."/>
        </authorList>
    </citation>
    <scope>NUCLEOTIDE SEQUENCE [LARGE SCALE GENOMIC DNA]</scope>
    <source>
        <strain>ATCC 700931 / Ty2</strain>
    </source>
</reference>
<name>YHHS_SALTI</name>
<sequence>MPEPVAEPALNGLRLNLRIVSIVMFNFASYLTIGLPLAVLPGYVHDAMGFSAFWAGLIISLQYFATLLSRPHAGRYADVLGPKKIVVFGLCGCFLSGLGYLLADIASAWPMINLLLLGLGRVILGIGQSFAGTGSTLWGVGVVGSLHIGRVISWNGIVTYGAMAMGAPLGVLCYAWGGLQGLALTVMGVALLAVLLALPRPSVKANKGKPLPFRAVLGRVWLYGMALALASAGFGVIATFITLFYDAKGWDGAAFALTLFSVAFVGTRLLFPNGINRLGGLNVAMICFGVEIIGLLLVGTAAMPWMAKIGVLLTGMGFSLVFPALGVVAVKAVPPQNQGAALATYTVFMDMSLGVTGPLAGLVMTWAGVPVIYLAAAGLVAMALLLTWRLKKRPPSALPEAASSS</sequence>
<gene>
    <name type="primary">yhhS</name>
    <name type="ordered locus">STY4230</name>
    <name type="ordered locus">t3941</name>
</gene>
<accession>Q8Z257</accession>
<proteinExistence type="inferred from homology"/>
<evidence type="ECO:0000255" key="1">
    <source>
        <dbReference type="HAMAP-Rule" id="MF_01118"/>
    </source>
</evidence>
<feature type="chain" id="PRO_0000087810" description="Uncharacterized MFS-type transporter YhhS">
    <location>
        <begin position="1"/>
        <end position="405"/>
    </location>
</feature>
<feature type="transmembrane region" description="Helical" evidence="1">
    <location>
        <begin position="19"/>
        <end position="39"/>
    </location>
</feature>
<feature type="transmembrane region" description="Helical" evidence="1">
    <location>
        <begin position="48"/>
        <end position="68"/>
    </location>
</feature>
<feature type="transmembrane region" description="Helical" evidence="1">
    <location>
        <begin position="85"/>
        <end position="105"/>
    </location>
</feature>
<feature type="transmembrane region" description="Helical" evidence="1">
    <location>
        <begin position="129"/>
        <end position="149"/>
    </location>
</feature>
<feature type="transmembrane region" description="Helical" evidence="1">
    <location>
        <begin position="156"/>
        <end position="176"/>
    </location>
</feature>
<feature type="transmembrane region" description="Helical" evidence="1">
    <location>
        <begin position="178"/>
        <end position="198"/>
    </location>
</feature>
<feature type="transmembrane region" description="Helical" evidence="1">
    <location>
        <begin position="224"/>
        <end position="244"/>
    </location>
</feature>
<feature type="transmembrane region" description="Helical" evidence="1">
    <location>
        <begin position="252"/>
        <end position="272"/>
    </location>
</feature>
<feature type="transmembrane region" description="Helical" evidence="1">
    <location>
        <begin position="283"/>
        <end position="303"/>
    </location>
</feature>
<feature type="transmembrane region" description="Helical" evidence="1">
    <location>
        <begin position="309"/>
        <end position="329"/>
    </location>
</feature>
<feature type="transmembrane region" description="Helical" evidence="1">
    <location>
        <begin position="344"/>
        <end position="364"/>
    </location>
</feature>
<feature type="transmembrane region" description="Helical" evidence="1">
    <location>
        <begin position="366"/>
        <end position="386"/>
    </location>
</feature>